<evidence type="ECO:0000250" key="1"/>
<evidence type="ECO:0000256" key="2">
    <source>
        <dbReference type="SAM" id="MobiDB-lite"/>
    </source>
</evidence>
<evidence type="ECO:0000305" key="3"/>
<dbReference type="EMBL" id="AB019236">
    <property type="protein sequence ID" value="BAA97301.1"/>
    <property type="molecule type" value="Genomic_DNA"/>
</dbReference>
<dbReference type="EMBL" id="CP002688">
    <property type="protein sequence ID" value="AED97965.1"/>
    <property type="molecule type" value="Genomic_DNA"/>
</dbReference>
<dbReference type="EMBL" id="AY088708">
    <property type="protein sequence ID" value="AAM67027.1"/>
    <property type="molecule type" value="mRNA"/>
</dbReference>
<dbReference type="EMBL" id="BT024677">
    <property type="protein sequence ID" value="ABD57502.1"/>
    <property type="molecule type" value="mRNA"/>
</dbReference>
<dbReference type="RefSeq" id="NP_569000.1">
    <property type="nucleotide sequence ID" value="NM_125887.3"/>
</dbReference>
<dbReference type="STRING" id="3702.Q9LV88"/>
<dbReference type="MetOSite" id="Q9LV88"/>
<dbReference type="PaxDb" id="3702-AT5G64890.1"/>
<dbReference type="EnsemblPlants" id="AT5G64890.1">
    <property type="protein sequence ID" value="AT5G64890.1"/>
    <property type="gene ID" value="AT5G64890"/>
</dbReference>
<dbReference type="GeneID" id="836612"/>
<dbReference type="Gramene" id="AT5G64890.1">
    <property type="protein sequence ID" value="AT5G64890.1"/>
    <property type="gene ID" value="AT5G64890"/>
</dbReference>
<dbReference type="KEGG" id="ath:AT5G64890"/>
<dbReference type="Araport" id="AT5G64890"/>
<dbReference type="TAIR" id="AT5G64890">
    <property type="gene designation" value="PROPEP2"/>
</dbReference>
<dbReference type="HOGENOM" id="CLU_174284_0_0_1"/>
<dbReference type="InParanoid" id="Q9LV88"/>
<dbReference type="OMA" id="RHDPPTV"/>
<dbReference type="PhylomeDB" id="Q9LV88"/>
<dbReference type="PRO" id="PR:Q9LV88"/>
<dbReference type="Proteomes" id="UP000006548">
    <property type="component" value="Chromosome 5"/>
</dbReference>
<dbReference type="ExpressionAtlas" id="Q9LV88">
    <property type="expression patterns" value="baseline and differential"/>
</dbReference>
<dbReference type="GO" id="GO:0098542">
    <property type="term" value="P:defense response to other organism"/>
    <property type="evidence" value="ECO:0000270"/>
    <property type="project" value="TAIR"/>
</dbReference>
<dbReference type="GO" id="GO:0045087">
    <property type="term" value="P:innate immune response"/>
    <property type="evidence" value="ECO:0007669"/>
    <property type="project" value="InterPro"/>
</dbReference>
<dbReference type="InterPro" id="IPR035176">
    <property type="entry name" value="PEP"/>
</dbReference>
<dbReference type="Pfam" id="PF17232">
    <property type="entry name" value="Pep1_7"/>
    <property type="match status" value="1"/>
</dbReference>
<sequence>MEKLDKRREEETYLWIPVQFLDQALIAVLKCIGLLCQPAKKTAPSPVTFNQPEEQEEDYGVALKDDDVVVLLRDNKAKSKKRDKEKPSSGRPGQTNSVPNAAIQVYKED</sequence>
<protein>
    <recommendedName>
        <fullName>Elicitor peptide 2</fullName>
    </recommendedName>
</protein>
<comment type="function">
    <text evidence="1">Elicitor of plant defense.</text>
</comment>
<comment type="similarity">
    <text evidence="3">Belongs to the brassicaceae elicitor peptide family.</text>
</comment>
<keyword id="KW-0611">Plant defense</keyword>
<keyword id="KW-1185">Reference proteome</keyword>
<feature type="propeptide" id="PRO_0000249081" evidence="1">
    <location>
        <begin position="1"/>
        <end position="73"/>
    </location>
</feature>
<feature type="peptide" id="PRO_0000249082" description="Elicitor peptide 2">
    <location>
        <begin position="74"/>
        <end position="109"/>
    </location>
</feature>
<feature type="region of interest" description="Disordered" evidence="2">
    <location>
        <begin position="74"/>
        <end position="109"/>
    </location>
</feature>
<feature type="compositionally biased region" description="Basic and acidic residues" evidence="2">
    <location>
        <begin position="74"/>
        <end position="88"/>
    </location>
</feature>
<feature type="site" description="Required for ligand-receptor interaction" evidence="1">
    <location>
        <position position="90"/>
    </location>
</feature>
<feature type="sequence conflict" description="In Ref. 3; AAM67027." evidence="3" ref="3">
    <original>V</original>
    <variation>I</variation>
    <location>
        <position position="98"/>
    </location>
</feature>
<reference key="1">
    <citation type="journal article" date="2000" name="DNA Res.">
        <title>Structural analysis of Arabidopsis thaliana chromosome 5. X. Sequence features of the regions of 3,076,755 bp covered by sixty P1 and TAC clones.</title>
        <authorList>
            <person name="Sato S."/>
            <person name="Nakamura Y."/>
            <person name="Kaneko T."/>
            <person name="Katoh T."/>
            <person name="Asamizu E."/>
            <person name="Kotani H."/>
            <person name="Tabata S."/>
        </authorList>
    </citation>
    <scope>NUCLEOTIDE SEQUENCE [LARGE SCALE GENOMIC DNA]</scope>
    <source>
        <strain>cv. Columbia</strain>
    </source>
</reference>
<reference key="2">
    <citation type="journal article" date="2017" name="Plant J.">
        <title>Araport11: a complete reannotation of the Arabidopsis thaliana reference genome.</title>
        <authorList>
            <person name="Cheng C.Y."/>
            <person name="Krishnakumar V."/>
            <person name="Chan A.P."/>
            <person name="Thibaud-Nissen F."/>
            <person name="Schobel S."/>
            <person name="Town C.D."/>
        </authorList>
    </citation>
    <scope>GENOME REANNOTATION</scope>
    <source>
        <strain>cv. Columbia</strain>
    </source>
</reference>
<reference key="3">
    <citation type="submission" date="2002-03" db="EMBL/GenBank/DDBJ databases">
        <title>Full-length cDNA from Arabidopsis thaliana.</title>
        <authorList>
            <person name="Brover V.V."/>
            <person name="Troukhan M.E."/>
            <person name="Alexandrov N.A."/>
            <person name="Lu Y.-P."/>
            <person name="Flavell R.B."/>
            <person name="Feldmann K.A."/>
        </authorList>
    </citation>
    <scope>NUCLEOTIDE SEQUENCE [LARGE SCALE MRNA]</scope>
</reference>
<reference key="4">
    <citation type="submission" date="2006-02" db="EMBL/GenBank/DDBJ databases">
        <title>Arabidopsis ORF clones.</title>
        <authorList>
            <person name="Shinn P."/>
            <person name="Chen H."/>
            <person name="Kim C.J."/>
            <person name="Ecker J.R."/>
        </authorList>
    </citation>
    <scope>NUCLEOTIDE SEQUENCE [LARGE SCALE MRNA]</scope>
    <source>
        <strain>cv. Columbia</strain>
    </source>
</reference>
<reference key="5">
    <citation type="journal article" date="2006" name="Proc. Natl. Acad. Sci. U.S.A.">
        <title>An endogenous peptide signal in Arabidopsis activates components of the innate immune response.</title>
        <authorList>
            <person name="Huffaker A."/>
            <person name="Pearce G."/>
            <person name="Ryan C.A."/>
        </authorList>
    </citation>
    <scope>GENE FAMILY</scope>
    <scope>NOMENCLATURE</scope>
</reference>
<accession>Q9LV88</accession>
<accession>Q8L902</accession>
<name>PEP2_ARATH</name>
<proteinExistence type="inferred from homology"/>
<gene>
    <name type="primary">PEP2</name>
    <name type="synonym">PROPEP2</name>
    <name type="ordered locus">At5g64890</name>
    <name type="ORF">MXK3.12</name>
</gene>
<organism>
    <name type="scientific">Arabidopsis thaliana</name>
    <name type="common">Mouse-ear cress</name>
    <dbReference type="NCBI Taxonomy" id="3702"/>
    <lineage>
        <taxon>Eukaryota</taxon>
        <taxon>Viridiplantae</taxon>
        <taxon>Streptophyta</taxon>
        <taxon>Embryophyta</taxon>
        <taxon>Tracheophyta</taxon>
        <taxon>Spermatophyta</taxon>
        <taxon>Magnoliopsida</taxon>
        <taxon>eudicotyledons</taxon>
        <taxon>Gunneridae</taxon>
        <taxon>Pentapetalae</taxon>
        <taxon>rosids</taxon>
        <taxon>malvids</taxon>
        <taxon>Brassicales</taxon>
        <taxon>Brassicaceae</taxon>
        <taxon>Camelineae</taxon>
        <taxon>Arabidopsis</taxon>
    </lineage>
</organism>